<protein>
    <recommendedName>
        <fullName>Neurochondrin</fullName>
    </recommendedName>
    <alternativeName>
        <fullName>Neurite outgrowth-related protein from the rat brain</fullName>
    </alternativeName>
    <alternativeName>
        <fullName>Norbin</fullName>
    </alternativeName>
</protein>
<sequence length="729" mass="78923">MSCCDLAAAGQLGKAGIMASDCEPALNQAESRNPTLERYLGALREAKNDSEQFAALLLVTKAVKAGDIDAKTRRRIFDAVGFTFPNRLLTTKEAPDGCPDHVLRALGVALLACFCSDPELASHPQVLNKIPILCTFLTARGDPDDAARRSMIDDTYQCLTAVAGTPRGPRHLIAGGTVSALCQAYLGHGYGFDQALALLVGLLAAAETQCWKEAEPDLLAVLRGLSEDFQRAEDASKFELCQLLPLFLPPTTVPPECHRDLQAGLARILGSKLSSWQRNPALKLAARLAHACGSDWIPVGSSGSKFLALLVNLACVEVRLALEETGTEVKEDVVTACYALMELGIQECTRCEQSLLKEPQKVQLVSIMKEAIGAVIHYLLRVGPEKQKEPFVFASVRILGAWLAEETSSLRKEVCQLLPFLVRYAKTLYEEAEEASDISQQVANLAISPTTPGPAWPGDALRLLLPGWCHLTVEDGPREILIKEGAPSLLCKYFLQQWELTSPGHDTSVLPDSVEIGLQTCCHIFLNLVVTAPGLIKRDACFTSLMNTLMTSLPSLVQQQGRLLLAANVATLGLLMARLLSTSPALQGTPASRGFFAAAILFLSQSHVARATPGSDQAVLALSPDYEGIWADLQELWFLGMQAFTGCVPLLPWLAPAALRSRWPQELLQLLGSVSPNSVKPEMVAAYQGVLVELARANRLCREAMRLQAGEETASHYRMAALEQCLSEP</sequence>
<name>NCDN_RAT</name>
<accession>O35095</accession>
<accession>Q5PQW2</accession>
<proteinExistence type="evidence at protein level"/>
<evidence type="ECO:0000250" key="1">
    <source>
        <dbReference type="UniProtKB" id="Q9UBB6"/>
    </source>
</evidence>
<evidence type="ECO:0000250" key="2">
    <source>
        <dbReference type="UniProtKB" id="Q9Z0E0"/>
    </source>
</evidence>
<evidence type="ECO:0000269" key="3">
    <source>
    </source>
</evidence>
<evidence type="ECO:0000269" key="4">
    <source>
    </source>
</evidence>
<evidence type="ECO:0000269" key="5">
    <source>
    </source>
</evidence>
<evidence type="ECO:0000269" key="6">
    <source>
    </source>
</evidence>
<evidence type="ECO:0000269" key="7">
    <source>
    </source>
</evidence>
<evidence type="ECO:0000305" key="8"/>
<evidence type="ECO:0000305" key="9">
    <source>
    </source>
</evidence>
<evidence type="ECO:0007744" key="10">
    <source>
    </source>
</evidence>
<comment type="function">
    <text evidence="7">Probably involved in signal transduction, in the nervous system, via increasing cell surface localization of GRM5 and positively regulating its signaling. Required for the spatial learning process. Acts as a negative regulator of Ca(2+)-calmodulin-dependent protein kinase 2 (CaMK2) phosphorylation. May play a role in modulating melanin-concentrating hormone-mediated functions via its interaction with MCHR1 that interferes with G protein-coupled signal transduction. May be involved in bone metabolism. May also be involved in neurite outgrowth.</text>
</comment>
<comment type="subunit">
    <text evidence="1 2 5">Interacts with MCHR1 (By similarity). Interacts with SEMA4C. Interacts with DIAPH1 (via FH3 domain) (By similarity). Interacts with GRM5 (PubMed:20007903).</text>
</comment>
<comment type="subcellular location">
    <subcellularLocation>
        <location evidence="3">Cytoplasm</location>
        <location evidence="3">Cytosol</location>
    </subcellularLocation>
    <subcellularLocation>
        <location evidence="6">Endosome membrane</location>
        <topology evidence="9">Lipid-anchor</topology>
    </subcellularLocation>
    <subcellularLocation>
        <location evidence="3 6">Cell projection</location>
        <location evidence="3 6">Dendrite</location>
    </subcellularLocation>
    <subcellularLocation>
        <location evidence="6">Postsynapse</location>
    </subcellularLocation>
    <text evidence="3 6">Localizes to somatic regions of neurons (PubMed:10521593, PubMed:23687301). Localization to endosome membrane requires palmitoylation (PubMed:23687301).</text>
</comment>
<comment type="tissue specificity">
    <text evidence="3 4 7">Expressed in brain and in peripheral nervous system (at protein level). Weakly expressed in neurites.</text>
</comment>
<comment type="induction">
    <text evidence="7">Upon tetraethylammonium (TEA) treatment.</text>
</comment>
<comment type="PTM">
    <text evidence="6">Palmitoylated (PubMed:23687301). Palmitoylation by ZDHHC1, ZDHHC3 and ZDHHC11 regulates the association of NCDN with endosome membranes (PubMed:23687301). May also be palmitoylated by ZDHHC7 (PubMed:23687301).</text>
</comment>
<comment type="similarity">
    <text evidence="8">Belongs to the neurochondrin family.</text>
</comment>
<dbReference type="EMBL" id="AB006461">
    <property type="protein sequence ID" value="BAA22938.1"/>
    <property type="molecule type" value="mRNA"/>
</dbReference>
<dbReference type="EMBL" id="BC087000">
    <property type="protein sequence ID" value="AAH87000.1"/>
    <property type="molecule type" value="mRNA"/>
</dbReference>
<dbReference type="PIR" id="JC5812">
    <property type="entry name" value="JC5812"/>
</dbReference>
<dbReference type="RefSeq" id="NP_445995.2">
    <property type="nucleotide sequence ID" value="NM_053543.2"/>
</dbReference>
<dbReference type="RefSeq" id="XP_017449158.1">
    <property type="nucleotide sequence ID" value="XM_017593669.1"/>
</dbReference>
<dbReference type="SMR" id="O35095"/>
<dbReference type="BioGRID" id="250125">
    <property type="interactions" value="3"/>
</dbReference>
<dbReference type="FunCoup" id="O35095">
    <property type="interactions" value="1416"/>
</dbReference>
<dbReference type="IntAct" id="O35095">
    <property type="interactions" value="3"/>
</dbReference>
<dbReference type="MINT" id="O35095"/>
<dbReference type="STRING" id="10116.ENSRNOP00000016229"/>
<dbReference type="GlyGen" id="O35095">
    <property type="glycosylation" value="3 sites, 1 O-linked glycan (1 site)"/>
</dbReference>
<dbReference type="iPTMnet" id="O35095"/>
<dbReference type="PhosphoSitePlus" id="O35095"/>
<dbReference type="SwissPalm" id="O35095"/>
<dbReference type="jPOST" id="O35095"/>
<dbReference type="PaxDb" id="10116-ENSRNOP00000016229"/>
<dbReference type="Ensembl" id="ENSRNOT00000016230.5">
    <property type="protein sequence ID" value="ENSRNOP00000016229.4"/>
    <property type="gene ID" value="ENSRNOG00000011751.5"/>
</dbReference>
<dbReference type="GeneID" id="89791"/>
<dbReference type="KEGG" id="rno:89791"/>
<dbReference type="UCSC" id="RGD:621734">
    <property type="organism name" value="rat"/>
</dbReference>
<dbReference type="AGR" id="RGD:621734"/>
<dbReference type="CTD" id="23154"/>
<dbReference type="RGD" id="621734">
    <property type="gene designation" value="Ncdn"/>
</dbReference>
<dbReference type="eggNOG" id="KOG2611">
    <property type="taxonomic scope" value="Eukaryota"/>
</dbReference>
<dbReference type="GeneTree" id="ENSGT00390000013601"/>
<dbReference type="HOGENOM" id="CLU_012443_0_0_1"/>
<dbReference type="InParanoid" id="O35095"/>
<dbReference type="OMA" id="IVHYKKP"/>
<dbReference type="OrthoDB" id="35712at9989"/>
<dbReference type="PhylomeDB" id="O35095"/>
<dbReference type="TreeFam" id="TF323752"/>
<dbReference type="PRO" id="PR:O35095"/>
<dbReference type="Proteomes" id="UP000002494">
    <property type="component" value="Chromosome 5"/>
</dbReference>
<dbReference type="Bgee" id="ENSRNOG00000011751">
    <property type="expression patterns" value="Expressed in Ammon's horn and 19 other cell types or tissues"/>
</dbReference>
<dbReference type="GO" id="GO:0005829">
    <property type="term" value="C:cytosol"/>
    <property type="evidence" value="ECO:0000314"/>
    <property type="project" value="UniProtKB"/>
</dbReference>
<dbReference type="GO" id="GO:0030425">
    <property type="term" value="C:dendrite"/>
    <property type="evidence" value="ECO:0000314"/>
    <property type="project" value="UniProtKB"/>
</dbReference>
<dbReference type="GO" id="GO:0010008">
    <property type="term" value="C:endosome membrane"/>
    <property type="evidence" value="ECO:0000314"/>
    <property type="project" value="UniProtKB"/>
</dbReference>
<dbReference type="GO" id="GO:0098978">
    <property type="term" value="C:glutamatergic synapse"/>
    <property type="evidence" value="ECO:0000266"/>
    <property type="project" value="RGD"/>
</dbReference>
<dbReference type="GO" id="GO:0016020">
    <property type="term" value="C:membrane"/>
    <property type="evidence" value="ECO:0000266"/>
    <property type="project" value="RGD"/>
</dbReference>
<dbReference type="GO" id="GO:0043005">
    <property type="term" value="C:neuron projection"/>
    <property type="evidence" value="ECO:0000266"/>
    <property type="project" value="RGD"/>
</dbReference>
<dbReference type="GO" id="GO:0043025">
    <property type="term" value="C:neuronal cell body"/>
    <property type="evidence" value="ECO:0000314"/>
    <property type="project" value="UniProtKB"/>
</dbReference>
<dbReference type="GO" id="GO:0043204">
    <property type="term" value="C:perikaryon"/>
    <property type="evidence" value="ECO:0000314"/>
    <property type="project" value="UniProtKB"/>
</dbReference>
<dbReference type="GO" id="GO:0098794">
    <property type="term" value="C:postsynapse"/>
    <property type="evidence" value="ECO:0000314"/>
    <property type="project" value="UniProtKB"/>
</dbReference>
<dbReference type="GO" id="GO:0045453">
    <property type="term" value="P:bone resorption"/>
    <property type="evidence" value="ECO:0000266"/>
    <property type="project" value="RGD"/>
</dbReference>
<dbReference type="GO" id="GO:0031175">
    <property type="term" value="P:neuron projection development"/>
    <property type="evidence" value="ECO:0000270"/>
    <property type="project" value="UniProtKB"/>
</dbReference>
<dbReference type="GO" id="GO:0048168">
    <property type="term" value="P:regulation of neuronal synaptic plasticity"/>
    <property type="evidence" value="ECO:0000314"/>
    <property type="project" value="RGD"/>
</dbReference>
<dbReference type="GO" id="GO:0099149">
    <property type="term" value="P:regulation of postsynaptic neurotransmitter receptor internalization"/>
    <property type="evidence" value="ECO:0000266"/>
    <property type="project" value="RGD"/>
</dbReference>
<dbReference type="InterPro" id="IPR016024">
    <property type="entry name" value="ARM-type_fold"/>
</dbReference>
<dbReference type="InterPro" id="IPR008709">
    <property type="entry name" value="Neurochondrin"/>
</dbReference>
<dbReference type="PANTHER" id="PTHR13109">
    <property type="entry name" value="NEUROCHONDRIN"/>
    <property type="match status" value="1"/>
</dbReference>
<dbReference type="PANTHER" id="PTHR13109:SF7">
    <property type="entry name" value="NEUROCHONDRIN"/>
    <property type="match status" value="1"/>
</dbReference>
<dbReference type="Pfam" id="PF05536">
    <property type="entry name" value="Neurochondrin"/>
    <property type="match status" value="1"/>
</dbReference>
<dbReference type="SUPFAM" id="SSF48371">
    <property type="entry name" value="ARM repeat"/>
    <property type="match status" value="1"/>
</dbReference>
<organism>
    <name type="scientific">Rattus norvegicus</name>
    <name type="common">Rat</name>
    <dbReference type="NCBI Taxonomy" id="10116"/>
    <lineage>
        <taxon>Eukaryota</taxon>
        <taxon>Metazoa</taxon>
        <taxon>Chordata</taxon>
        <taxon>Craniata</taxon>
        <taxon>Vertebrata</taxon>
        <taxon>Euteleostomi</taxon>
        <taxon>Mammalia</taxon>
        <taxon>Eutheria</taxon>
        <taxon>Euarchontoglires</taxon>
        <taxon>Glires</taxon>
        <taxon>Rodentia</taxon>
        <taxon>Myomorpha</taxon>
        <taxon>Muroidea</taxon>
        <taxon>Muridae</taxon>
        <taxon>Murinae</taxon>
        <taxon>Rattus</taxon>
    </lineage>
</organism>
<feature type="initiator methionine" description="Removed" evidence="1">
    <location>
        <position position="1"/>
    </location>
</feature>
<feature type="chain" id="PRO_0000324619" description="Neurochondrin">
    <location>
        <begin position="2"/>
        <end position="729"/>
    </location>
</feature>
<feature type="modified residue" description="N-acetylserine" evidence="1">
    <location>
        <position position="2"/>
    </location>
</feature>
<feature type="modified residue" description="Phosphoserine" evidence="1">
    <location>
        <position position="2"/>
    </location>
</feature>
<feature type="modified residue" description="Asymmetric dimethylarginine" evidence="2">
    <location>
        <position position="75"/>
    </location>
</feature>
<feature type="modified residue" description="Phosphoserine" evidence="10">
    <location>
        <position position="448"/>
    </location>
</feature>
<feature type="lipid moiety-binding region" description="S-palmitoyl cysteine" evidence="6">
    <location>
        <position position="3"/>
    </location>
</feature>
<feature type="lipid moiety-binding region" description="S-palmitoyl cysteine" evidence="6">
    <location>
        <position position="4"/>
    </location>
</feature>
<feature type="mutagenesis site" description="Loss of palmitoylation." evidence="6">
    <original>C</original>
    <variation>S</variation>
    <location>
        <position position="3"/>
    </location>
</feature>
<feature type="mutagenesis site" description="Loss of palmitoylation." evidence="6">
    <original>C</original>
    <variation>S</variation>
    <location>
        <position position="4"/>
    </location>
</feature>
<feature type="sequence conflict" description="In Ref. 1; BAA22938." evidence="8" ref="1">
    <original>R</original>
    <variation>Q</variation>
    <location>
        <position position="381"/>
    </location>
</feature>
<keyword id="KW-0007">Acetylation</keyword>
<keyword id="KW-0966">Cell projection</keyword>
<keyword id="KW-0963">Cytoplasm</keyword>
<keyword id="KW-0967">Endosome</keyword>
<keyword id="KW-0449">Lipoprotein</keyword>
<keyword id="KW-0472">Membrane</keyword>
<keyword id="KW-0488">Methylation</keyword>
<keyword id="KW-0564">Palmitate</keyword>
<keyword id="KW-0597">Phosphoprotein</keyword>
<keyword id="KW-1185">Reference proteome</keyword>
<keyword id="KW-0770">Synapse</keyword>
<reference key="1">
    <citation type="journal article" date="1997" name="Biochem. Biophys. Res. Commun.">
        <title>A novel brain gene, norbin, induced by treatment of tetraethylammonium in rat hippocampal slice and accompanied with neurite-outgrowth in neuro 2a cells.</title>
        <authorList>
            <person name="Shinozaki K."/>
            <person name="Maruyama K."/>
            <person name="Kume H."/>
            <person name="Kuzume H."/>
            <person name="Obata K."/>
        </authorList>
    </citation>
    <scope>NUCLEOTIDE SEQUENCE [MRNA]</scope>
    <scope>FUNCTION</scope>
    <scope>TISSUE SPECIFICITY</scope>
    <scope>INDUCTION</scope>
    <source>
        <strain>Wistar</strain>
        <tissue>Brain</tissue>
    </source>
</reference>
<reference key="2">
    <citation type="journal article" date="2004" name="Genome Res.">
        <title>The status, quality, and expansion of the NIH full-length cDNA project: the Mammalian Gene Collection (MGC).</title>
        <authorList>
            <consortium name="The MGC Project Team"/>
        </authorList>
    </citation>
    <scope>NUCLEOTIDE SEQUENCE [LARGE SCALE MRNA]</scope>
    <source>
        <tissue>Heart</tissue>
    </source>
</reference>
<reference key="3">
    <citation type="journal article" date="1999" name="Brain Res. Mol. Brain Res.">
        <title>Norbin, a neurite-outgrowth-related protein, is a cytosolic protein localized in the somatodendritic region of neurons and distributed prominently in dendritic outgrowth in Purkinje cells.</title>
        <authorList>
            <person name="Shinozaki K."/>
            <person name="Kume H."/>
            <person name="Kuzume H."/>
            <person name="Obata K."/>
            <person name="Maruyama K."/>
        </authorList>
    </citation>
    <scope>SUBCELLULAR LOCATION</scope>
    <scope>TISSUE SPECIFICITY</scope>
</reference>
<reference key="4">
    <citation type="journal article" date="2008" name="Biochem. Biophys. Res. Commun.">
        <title>Identification of Neurochondrin as a new interaction partner of the FH3 domain of the Diaphanous-related formin Dia1.</title>
        <authorList>
            <person name="Schwaibold E.M."/>
            <person name="Brandt D.T."/>
        </authorList>
    </citation>
    <scope>TISSUE SPECIFICITY</scope>
</reference>
<reference key="5">
    <citation type="journal article" date="2009" name="Science">
        <title>Norbin is an endogenous regulator of metabotropic glutamate receptor 5 signaling.</title>
        <authorList>
            <person name="Wang H."/>
            <person name="Westin L."/>
            <person name="Nong Y."/>
            <person name="Birnbaum S."/>
            <person name="Bendor J."/>
            <person name="Brismar H."/>
            <person name="Nestler E."/>
            <person name="Aperia A."/>
            <person name="Flajolet M."/>
            <person name="Greengard P."/>
        </authorList>
    </citation>
    <scope>INTERACTION WITH GRM5</scope>
</reference>
<reference key="6">
    <citation type="journal article" date="2012" name="Nat. Commun.">
        <title>Quantitative maps of protein phosphorylation sites across 14 different rat organs and tissues.</title>
        <authorList>
            <person name="Lundby A."/>
            <person name="Secher A."/>
            <person name="Lage K."/>
            <person name="Nordsborg N.B."/>
            <person name="Dmytriyev A."/>
            <person name="Lundby C."/>
            <person name="Olsen J.V."/>
        </authorList>
    </citation>
    <scope>PHOSPHORYLATION [LARGE SCALE ANALYSIS] AT SER-448</scope>
    <scope>IDENTIFICATION BY MASS SPECTROMETRY [LARGE SCALE ANALYSIS]</scope>
</reference>
<reference key="7">
    <citation type="journal article" date="2013" name="J. Biol. Chem.">
        <title>In silico screening for palmitoyl substrates reveals a role for DHHC1/3/10 (zDHHC1/3/11)-mediated neurochondrin palmitoylation in its targeting to Rab5-positive endosomes.</title>
        <authorList>
            <person name="Oku S."/>
            <person name="Takahashi N."/>
            <person name="Fukata Y."/>
            <person name="Fukata M."/>
        </authorList>
    </citation>
    <scope>SUBCELLULAR LOCATION</scope>
    <scope>PALMITOYLATION AT CYS-3 AND CYS-4</scope>
    <scope>MUTAGENESIS OF CYS-3 AND CYS-4</scope>
</reference>
<gene>
    <name type="primary">Ncdn</name>
</gene>